<proteinExistence type="evidence at transcript level"/>
<reference key="1">
    <citation type="journal article" date="2004" name="Genome Res.">
        <title>The status, quality, and expansion of the NIH full-length cDNA project: the Mammalian Gene Collection (MGC).</title>
        <authorList>
            <consortium name="The MGC Project Team"/>
        </authorList>
    </citation>
    <scope>NUCLEOTIDE SEQUENCE [LARGE SCALE MRNA]</scope>
    <source>
        <tissue>Placenta</tissue>
    </source>
</reference>
<protein>
    <recommendedName>
        <fullName evidence="3">Kelch-like protein 25</fullName>
    </recommendedName>
</protein>
<keyword id="KW-0880">Kelch repeat</keyword>
<keyword id="KW-1185">Reference proteome</keyword>
<keyword id="KW-0677">Repeat</keyword>
<keyword id="KW-0810">Translation regulation</keyword>
<keyword id="KW-0833">Ubl conjugation pathway</keyword>
<gene>
    <name evidence="4" type="primary">Klhl25</name>
</gene>
<sequence>MSVSVHETRKSRSSTGSMNISVFHKASHPDCVLAHLNTLRKHCMFTDVTLWAGDRAFPCHRAVLAASSRYFEAMFSHGLRESRDDTVNFQDNLHPEVLELLLDFAYSSRIVINEENAESLLEAGDMLQFHDVRDAAAEFLEKNLSPSNCLGMMVLSDAHQCRRLYEFSCRMSLVHFETVRQSEDFNSLSRDTLLDLISRDELETEDERVVFEAILQWVKHDLEQRKVHLPLLLRNVRLALLPSDCLKKAVSGEALLMADECTKLIIDEAFRCKTKILLNDGVVTSPFARPRKAGHTLLILGGQTFMCDKIYQVDHKAKEIIPKADLPSPRKEFSASAIGCKVYVTGGRGSENGVSKDVWVYDTVHEEWSKAAPMLIARFGHGSAELENCLYVVGGHTSLAGIFPASPSVSLKQVEKYDPGDNKWTMVAPMRDGVSNAAVVSAKLKLFVFGGTSIHRDMVSKVQCFDPSDNRWTIKAECPQPWRYTAAAVLGSQIFIMGGDTEYTAASAYRFDCETNQWTRIGDMTAKRMSCHAVASGNKLYVVGGYFGTQRCKTLDCYDPTSDTWNCITSVPYSLIPTAFVSTWKHLPA</sequence>
<accession>Q4KLM4</accession>
<organism>
    <name type="scientific">Rattus norvegicus</name>
    <name type="common">Rat</name>
    <dbReference type="NCBI Taxonomy" id="10116"/>
    <lineage>
        <taxon>Eukaryota</taxon>
        <taxon>Metazoa</taxon>
        <taxon>Chordata</taxon>
        <taxon>Craniata</taxon>
        <taxon>Vertebrata</taxon>
        <taxon>Euteleostomi</taxon>
        <taxon>Mammalia</taxon>
        <taxon>Eutheria</taxon>
        <taxon>Euarchontoglires</taxon>
        <taxon>Glires</taxon>
        <taxon>Rodentia</taxon>
        <taxon>Myomorpha</taxon>
        <taxon>Muroidea</taxon>
        <taxon>Muridae</taxon>
        <taxon>Murinae</taxon>
        <taxon>Rattus</taxon>
    </lineage>
</organism>
<name>KLH25_RAT</name>
<dbReference type="EMBL" id="BC099111">
    <property type="protein sequence ID" value="AAH99111.1"/>
    <property type="molecule type" value="mRNA"/>
</dbReference>
<dbReference type="RefSeq" id="NP_001034095.1">
    <property type="nucleotide sequence ID" value="NM_001039006.1"/>
</dbReference>
<dbReference type="RefSeq" id="XP_006229441.1">
    <property type="nucleotide sequence ID" value="XM_006229379.2"/>
</dbReference>
<dbReference type="RefSeq" id="XP_006229442.1">
    <property type="nucleotide sequence ID" value="XM_006229380.4"/>
</dbReference>
<dbReference type="RefSeq" id="XP_006229443.1">
    <property type="nucleotide sequence ID" value="XM_006229381.3"/>
</dbReference>
<dbReference type="RefSeq" id="XP_008757727.1">
    <property type="nucleotide sequence ID" value="XM_008759505.4"/>
</dbReference>
<dbReference type="RefSeq" id="XP_063140585.1">
    <property type="nucleotide sequence ID" value="XM_063284515.1"/>
</dbReference>
<dbReference type="SMR" id="Q4KLM4"/>
<dbReference type="FunCoup" id="Q4KLM4">
    <property type="interactions" value="55"/>
</dbReference>
<dbReference type="STRING" id="10116.ENSRNOP00000014553"/>
<dbReference type="PhosphoSitePlus" id="Q4KLM4"/>
<dbReference type="PaxDb" id="10116-ENSRNOP00000014553"/>
<dbReference type="Ensembl" id="ENSRNOT00000014553.5">
    <property type="protein sequence ID" value="ENSRNOP00000014553.3"/>
    <property type="gene ID" value="ENSRNOG00000010959.5"/>
</dbReference>
<dbReference type="Ensembl" id="ENSRNOT00000097328.1">
    <property type="protein sequence ID" value="ENSRNOP00000089869.1"/>
    <property type="gene ID" value="ENSRNOG00000010959.5"/>
</dbReference>
<dbReference type="Ensembl" id="ENSRNOT00000111640.1">
    <property type="protein sequence ID" value="ENSRNOP00000097538.1"/>
    <property type="gene ID" value="ENSRNOG00000010959.5"/>
</dbReference>
<dbReference type="Ensembl" id="ENSRNOT00000112874.1">
    <property type="protein sequence ID" value="ENSRNOP00000090402.1"/>
    <property type="gene ID" value="ENSRNOG00000010959.5"/>
</dbReference>
<dbReference type="Ensembl" id="ENSRNOT00000112989.1">
    <property type="protein sequence ID" value="ENSRNOP00000091951.1"/>
    <property type="gene ID" value="ENSRNOG00000010959.5"/>
</dbReference>
<dbReference type="GeneID" id="293023"/>
<dbReference type="KEGG" id="rno:293023"/>
<dbReference type="UCSC" id="RGD:1310815">
    <property type="organism name" value="rat"/>
</dbReference>
<dbReference type="AGR" id="RGD:1310815"/>
<dbReference type="CTD" id="64410"/>
<dbReference type="RGD" id="1310815">
    <property type="gene designation" value="Klhl25"/>
</dbReference>
<dbReference type="eggNOG" id="KOG4441">
    <property type="taxonomic scope" value="Eukaryota"/>
</dbReference>
<dbReference type="GeneTree" id="ENSGT00950000182983"/>
<dbReference type="HOGENOM" id="CLU_004253_14_6_1"/>
<dbReference type="InParanoid" id="Q4KLM4"/>
<dbReference type="OMA" id="SNCLAMM"/>
<dbReference type="OrthoDB" id="9449at9989"/>
<dbReference type="PhylomeDB" id="Q4KLM4"/>
<dbReference type="TreeFam" id="TF329218"/>
<dbReference type="Reactome" id="R-RNO-8951664">
    <property type="pathway name" value="Neddylation"/>
</dbReference>
<dbReference type="Reactome" id="R-RNO-983168">
    <property type="pathway name" value="Antigen processing: Ubiquitination &amp; Proteasome degradation"/>
</dbReference>
<dbReference type="UniPathway" id="UPA00143"/>
<dbReference type="PRO" id="PR:Q4KLM4"/>
<dbReference type="Proteomes" id="UP000002494">
    <property type="component" value="Chromosome 1"/>
</dbReference>
<dbReference type="Bgee" id="ENSRNOG00000010959">
    <property type="expression patterns" value="Expressed in liver and 19 other cell types or tissues"/>
</dbReference>
<dbReference type="GO" id="GO:0031463">
    <property type="term" value="C:Cul3-RING ubiquitin ligase complex"/>
    <property type="evidence" value="ECO:0000250"/>
    <property type="project" value="UniProtKB"/>
</dbReference>
<dbReference type="GO" id="GO:1990756">
    <property type="term" value="F:ubiquitin-like ligase-substrate adaptor activity"/>
    <property type="evidence" value="ECO:0000250"/>
    <property type="project" value="UniProtKB"/>
</dbReference>
<dbReference type="GO" id="GO:0045717">
    <property type="term" value="P:negative regulation of fatty acid biosynthetic process"/>
    <property type="evidence" value="ECO:0000266"/>
    <property type="project" value="RGD"/>
</dbReference>
<dbReference type="GO" id="GO:0032831">
    <property type="term" value="P:positive regulation of CD4-positive, CD25-positive, alpha-beta regulatory T cell differentiation"/>
    <property type="evidence" value="ECO:0000250"/>
    <property type="project" value="UniProtKB"/>
</dbReference>
<dbReference type="GO" id="GO:0046321">
    <property type="term" value="P:positive regulation of fatty acid oxidation"/>
    <property type="evidence" value="ECO:0000250"/>
    <property type="project" value="UniProtKB"/>
</dbReference>
<dbReference type="GO" id="GO:0016567">
    <property type="term" value="P:protein ubiquitination"/>
    <property type="evidence" value="ECO:0000250"/>
    <property type="project" value="UniProtKB"/>
</dbReference>
<dbReference type="GO" id="GO:0006446">
    <property type="term" value="P:regulation of translational initiation"/>
    <property type="evidence" value="ECO:0000250"/>
    <property type="project" value="UniProtKB"/>
</dbReference>
<dbReference type="GO" id="GO:0006511">
    <property type="term" value="P:ubiquitin-dependent protein catabolic process"/>
    <property type="evidence" value="ECO:0000250"/>
    <property type="project" value="UniProtKB"/>
</dbReference>
<dbReference type="CDD" id="cd18254">
    <property type="entry name" value="BTB_POZ_KLHL25"/>
    <property type="match status" value="1"/>
</dbReference>
<dbReference type="FunFam" id="2.120.10.80:FF:000003">
    <property type="entry name" value="Ectoderm-neural cortex protein 1"/>
    <property type="match status" value="1"/>
</dbReference>
<dbReference type="FunFam" id="2.120.10.80:FF:000004">
    <property type="entry name" value="Ectoderm-neural cortex protein 1"/>
    <property type="match status" value="1"/>
</dbReference>
<dbReference type="FunFam" id="3.30.710.10:FF:000023">
    <property type="entry name" value="Ectoderm-neural cortex protein 1"/>
    <property type="match status" value="1"/>
</dbReference>
<dbReference type="FunFam" id="1.25.40.420:FF:000001">
    <property type="entry name" value="Kelch-like family member 12"/>
    <property type="match status" value="1"/>
</dbReference>
<dbReference type="Gene3D" id="1.25.40.420">
    <property type="match status" value="1"/>
</dbReference>
<dbReference type="Gene3D" id="2.120.10.80">
    <property type="entry name" value="Kelch-type beta propeller"/>
    <property type="match status" value="2"/>
</dbReference>
<dbReference type="Gene3D" id="3.30.710.10">
    <property type="entry name" value="Potassium Channel Kv1.1, Chain A"/>
    <property type="match status" value="1"/>
</dbReference>
<dbReference type="InterPro" id="IPR011705">
    <property type="entry name" value="BACK"/>
</dbReference>
<dbReference type="InterPro" id="IPR056737">
    <property type="entry name" value="Beta-prop_ATRN-MKLN-like"/>
</dbReference>
<dbReference type="InterPro" id="IPR017096">
    <property type="entry name" value="BTB-kelch_protein"/>
</dbReference>
<dbReference type="InterPro" id="IPR000210">
    <property type="entry name" value="BTB/POZ_dom"/>
</dbReference>
<dbReference type="InterPro" id="IPR015915">
    <property type="entry name" value="Kelch-typ_b-propeller"/>
</dbReference>
<dbReference type="InterPro" id="IPR006652">
    <property type="entry name" value="Kelch_1"/>
</dbReference>
<dbReference type="InterPro" id="IPR030565">
    <property type="entry name" value="KLHL25_BTB_POZ_dom"/>
</dbReference>
<dbReference type="InterPro" id="IPR011333">
    <property type="entry name" value="SKP1/BTB/POZ_sf"/>
</dbReference>
<dbReference type="PANTHER" id="PTHR24412">
    <property type="entry name" value="KELCH PROTEIN"/>
    <property type="match status" value="1"/>
</dbReference>
<dbReference type="PANTHER" id="PTHR24412:SF487">
    <property type="entry name" value="KELCH-LIKE PROTEIN 25"/>
    <property type="match status" value="1"/>
</dbReference>
<dbReference type="Pfam" id="PF07707">
    <property type="entry name" value="BACK"/>
    <property type="match status" value="1"/>
</dbReference>
<dbReference type="Pfam" id="PF24981">
    <property type="entry name" value="Beta-prop_ATRN-LZTR1"/>
    <property type="match status" value="1"/>
</dbReference>
<dbReference type="Pfam" id="PF00651">
    <property type="entry name" value="BTB"/>
    <property type="match status" value="1"/>
</dbReference>
<dbReference type="PIRSF" id="PIRSF037037">
    <property type="entry name" value="Kelch-like_protein_gigaxonin"/>
    <property type="match status" value="1"/>
</dbReference>
<dbReference type="SMART" id="SM00875">
    <property type="entry name" value="BACK"/>
    <property type="match status" value="1"/>
</dbReference>
<dbReference type="SMART" id="SM00225">
    <property type="entry name" value="BTB"/>
    <property type="match status" value="1"/>
</dbReference>
<dbReference type="SMART" id="SM00612">
    <property type="entry name" value="Kelch"/>
    <property type="match status" value="6"/>
</dbReference>
<dbReference type="SUPFAM" id="SSF117281">
    <property type="entry name" value="Kelch motif"/>
    <property type="match status" value="1"/>
</dbReference>
<dbReference type="SUPFAM" id="SSF54695">
    <property type="entry name" value="POZ domain"/>
    <property type="match status" value="1"/>
</dbReference>
<dbReference type="PROSITE" id="PS50097">
    <property type="entry name" value="BTB"/>
    <property type="match status" value="1"/>
</dbReference>
<feature type="chain" id="PRO_0000272310" description="Kelch-like protein 25">
    <location>
        <begin position="1"/>
        <end position="589"/>
    </location>
</feature>
<feature type="domain" description="BTB" evidence="2">
    <location>
        <begin position="46"/>
        <end position="114"/>
    </location>
</feature>
<feature type="domain" description="BACK">
    <location>
        <begin position="149"/>
        <end position="250"/>
    </location>
</feature>
<feature type="repeat" description="Kelch 1">
    <location>
        <begin position="296"/>
        <end position="340"/>
    </location>
</feature>
<feature type="repeat" description="Kelch 2">
    <location>
        <begin position="341"/>
        <end position="388"/>
    </location>
</feature>
<feature type="repeat" description="Kelch 3">
    <location>
        <begin position="389"/>
        <end position="444"/>
    </location>
</feature>
<feature type="repeat" description="Kelch 4">
    <location>
        <begin position="446"/>
        <end position="492"/>
    </location>
</feature>
<feature type="repeat" description="Kelch 5">
    <location>
        <begin position="493"/>
        <end position="538"/>
    </location>
</feature>
<feature type="repeat" description="Kelch 6">
    <location>
        <begin position="539"/>
        <end position="585"/>
    </location>
</feature>
<comment type="function">
    <text evidence="1">Substrate-specific adapter of a BCR (BTB-CUL3-RBX1) E3 ubiquitin ligase complex involved in various processes, such as translation homeostasis and lipid synthesis. The BCR(KLHL25) ubiquitin ligase complex acts by mediating ubiquitination of hypophosphorylated EIF4EBP1 (4E-BP1): ubiquitination and subsequent degradation of hypophosphorylated EIF4EBP1 (4E-BP1) probably serves as a homeostatic mechanism to maintain translation and prevent eIF4E inhibition when eIF4E levels are low. The BCR(KLHL25) complex does not target EIF4EBP1 (4E-BP1) when it is hyperphosphorylated or associated with eIF4E. The BCR(KLHL25) complex also acts as a regulator of lipid synthesis by mediating ubiquitination and degradation of ACLY, thereby inhibiting lipid synthesis. BCR(KLHL25)-mediated degradation of ACLY promotes fatty acid oxidation and is required for differentiation of inducible regulatory T (iTreg) cells.</text>
</comment>
<comment type="pathway">
    <text evidence="1">Protein modification; protein ubiquitination.</text>
</comment>
<comment type="subunit">
    <text evidence="1">Component of the BCR(KLHL25) E3 ubiquitin ligase complex, at least composed of CUL3, KLHL25 and RBX1.</text>
</comment>
<evidence type="ECO:0000250" key="1">
    <source>
        <dbReference type="UniProtKB" id="Q9H0H3"/>
    </source>
</evidence>
<evidence type="ECO:0000255" key="2">
    <source>
        <dbReference type="PROSITE-ProRule" id="PRU00037"/>
    </source>
</evidence>
<evidence type="ECO:0000305" key="3"/>
<evidence type="ECO:0000312" key="4">
    <source>
        <dbReference type="RGD" id="1310815"/>
    </source>
</evidence>